<evidence type="ECO:0000250" key="1">
    <source>
        <dbReference type="UniProtKB" id="P04798"/>
    </source>
</evidence>
<evidence type="ECO:0000269" key="2">
    <source>
    </source>
</evidence>
<evidence type="ECO:0000303" key="3">
    <source>
    </source>
</evidence>
<evidence type="ECO:0000305" key="4"/>
<evidence type="ECO:0000305" key="5">
    <source>
    </source>
</evidence>
<name>TWMD_TALWO</name>
<comment type="function">
    <text evidence="2 5">Cytochrome P450 monooxygenase; part of the gene cluster that mediates the biosynthesis of wortmanamides A and B, reduced long-chain polyketides amidated with a specific omega-amino acid, 5-aminopentanoic acid (5PA) (PubMed:29343058). The PKS modules of TwmB are involved in the synthesis of the polyketide backbone, whereas the non-canonical C domain of TwmB is a bonafide condensation domain that specifically selects 5PA and catalyzes amidation to release polyketide chain (PubMed:29343058). The C domain clearly prefers C16 and C18 fatty acyl substrates, which is consistent with simultaneous formation of both octaketide and nonaketide acyl amides wortmanamides A and B (PubMed:29343058). Because TwmB lacks a designated enoylreductase (ER) domain, the required activity is provided the enoyl reductase TwmE (PubMed:29343058). The roles of the remaining enzymes have still to be clarified (Probable).</text>
</comment>
<comment type="cofactor">
    <cofactor evidence="1">
        <name>heme</name>
        <dbReference type="ChEBI" id="CHEBI:30413"/>
    </cofactor>
</comment>
<comment type="pathway">
    <text evidence="5">Secondary metabolite biosynthesis.</text>
</comment>
<comment type="similarity">
    <text evidence="4">Belongs to the cytochrome P450 family.</text>
</comment>
<dbReference type="EC" id="1.-.-.-" evidence="5"/>
<dbReference type="EMBL" id="MG837521">
    <property type="protein sequence ID" value="AUY61972.1"/>
    <property type="molecule type" value="Genomic_DNA"/>
</dbReference>
<dbReference type="EMBL" id="MH399766">
    <property type="protein sequence ID" value="QBC19712.1"/>
    <property type="molecule type" value="Genomic_DNA"/>
</dbReference>
<dbReference type="SMR" id="A0A2L0P0J8"/>
<dbReference type="GO" id="GO:0020037">
    <property type="term" value="F:heme binding"/>
    <property type="evidence" value="ECO:0007669"/>
    <property type="project" value="InterPro"/>
</dbReference>
<dbReference type="GO" id="GO:0005506">
    <property type="term" value="F:iron ion binding"/>
    <property type="evidence" value="ECO:0007669"/>
    <property type="project" value="InterPro"/>
</dbReference>
<dbReference type="GO" id="GO:0004497">
    <property type="term" value="F:monooxygenase activity"/>
    <property type="evidence" value="ECO:0007669"/>
    <property type="project" value="UniProtKB-KW"/>
</dbReference>
<dbReference type="GO" id="GO:0016705">
    <property type="term" value="F:oxidoreductase activity, acting on paired donors, with incorporation or reduction of molecular oxygen"/>
    <property type="evidence" value="ECO:0007669"/>
    <property type="project" value="InterPro"/>
</dbReference>
<dbReference type="GO" id="GO:0009058">
    <property type="term" value="P:biosynthetic process"/>
    <property type="evidence" value="ECO:0007669"/>
    <property type="project" value="UniProtKB-ARBA"/>
</dbReference>
<dbReference type="Gene3D" id="1.10.630.10">
    <property type="entry name" value="Cytochrome P450"/>
    <property type="match status" value="1"/>
</dbReference>
<dbReference type="InterPro" id="IPR001128">
    <property type="entry name" value="Cyt_P450"/>
</dbReference>
<dbReference type="InterPro" id="IPR017972">
    <property type="entry name" value="Cyt_P450_CS"/>
</dbReference>
<dbReference type="InterPro" id="IPR002401">
    <property type="entry name" value="Cyt_P450_E_grp-I"/>
</dbReference>
<dbReference type="InterPro" id="IPR036396">
    <property type="entry name" value="Cyt_P450_sf"/>
</dbReference>
<dbReference type="InterPro" id="IPR050121">
    <property type="entry name" value="Cytochrome_P450_monoxygenase"/>
</dbReference>
<dbReference type="PANTHER" id="PTHR24305">
    <property type="entry name" value="CYTOCHROME P450"/>
    <property type="match status" value="1"/>
</dbReference>
<dbReference type="PANTHER" id="PTHR24305:SF210">
    <property type="entry name" value="CYTOCHROME P450 MONOOXYGENASE ASQL-RELATED"/>
    <property type="match status" value="1"/>
</dbReference>
<dbReference type="Pfam" id="PF00067">
    <property type="entry name" value="p450"/>
    <property type="match status" value="1"/>
</dbReference>
<dbReference type="PRINTS" id="PR00463">
    <property type="entry name" value="EP450I"/>
</dbReference>
<dbReference type="SUPFAM" id="SSF48264">
    <property type="entry name" value="Cytochrome P450"/>
    <property type="match status" value="1"/>
</dbReference>
<dbReference type="PROSITE" id="PS00086">
    <property type="entry name" value="CYTOCHROME_P450"/>
    <property type="match status" value="1"/>
</dbReference>
<reference key="1">
    <citation type="journal article" date="2018" name="J. Am. Chem. Soc.">
        <title>Biosynthesis of long-chain N-acyl amide by a truncated polyketide synthase-nonribosomal peptide synthetase hybrid megasynthase in fungi.</title>
        <authorList>
            <person name="Hai Y."/>
            <person name="Tang Y."/>
        </authorList>
    </citation>
    <scope>NUCLEOTIDE SEQUENCE [GENOMIC DNA]</scope>
    <scope>FUNCTION</scope>
    <scope>PATHWAY</scope>
    <source>
        <strain>ATCC 26942 / CBS 387.67 / CCM F-175 / VKM F-2091</strain>
    </source>
</reference>
<keyword id="KW-0349">Heme</keyword>
<keyword id="KW-0408">Iron</keyword>
<keyword id="KW-0479">Metal-binding</keyword>
<keyword id="KW-0503">Monooxygenase</keyword>
<keyword id="KW-0560">Oxidoreductase</keyword>
<sequence length="512" mass="58750">MAFLDYPPFDICTIQQLLTFIIISYTFYLTTRSIWRLYFHPLSKYPGPKVAAISDIWYAYHALAGRWPWAVADALEKYGDVVRIAPNEIAFVTPKALSDIYGSHNKNLENFAKTQINNHGNDEHGGLIWEWDPARHREVARQLSPAFSGRALRAKEATLHKYIDLFVERMTTLGGETGGVSLPTWINWLCVDISADMAYNREMNALKDMKEPPYLSILSGFNRAVVVTQMSWRFPLLSPLKGLFLAITAMRSHSHIRNHSRFQLEQRIRRKGAVEHLDFFEQLIPENREPPKDRKEMRHLEQVAGQLLVAGYEPPALWFYFTIYYLLKNPATLDTLTKEIRSAFKNYDEITSGSAAQLAYLSACLSESLRIMPGVLTGMPVVSPGAMVDGTYIPKGVVCQSSSLALARSPRNFRHALSFRPERWLQEDHALYDAQFAQDNRKGFQPFSQGPRICAGKEIAWWQSRVFLAKVLWTFDLEMVSGQQIDMARDLRGWGMYDKPEIRVRFRPKFVV</sequence>
<feature type="chain" id="PRO_0000452490" description="Cytochrome P450 monooxygenase TwmD">
    <location>
        <begin position="1"/>
        <end position="512"/>
    </location>
</feature>
<feature type="binding site" description="axial binding residue" evidence="1">
    <location>
        <position position="454"/>
    </location>
    <ligand>
        <name>heme</name>
        <dbReference type="ChEBI" id="CHEBI:30413"/>
    </ligand>
    <ligandPart>
        <name>Fe</name>
        <dbReference type="ChEBI" id="CHEBI:18248"/>
    </ligandPart>
</feature>
<organism>
    <name type="scientific">Talaromyces wortmannii</name>
    <name type="common">Penicillium wortmannii</name>
    <dbReference type="NCBI Taxonomy" id="28567"/>
    <lineage>
        <taxon>Eukaryota</taxon>
        <taxon>Fungi</taxon>
        <taxon>Dikarya</taxon>
        <taxon>Ascomycota</taxon>
        <taxon>Pezizomycotina</taxon>
        <taxon>Eurotiomycetes</taxon>
        <taxon>Eurotiomycetidae</taxon>
        <taxon>Eurotiales</taxon>
        <taxon>Trichocomaceae</taxon>
        <taxon>Talaromyces</taxon>
        <taxon>Talaromyces sect. Islandici</taxon>
    </lineage>
</organism>
<proteinExistence type="inferred from homology"/>
<gene>
    <name evidence="3" type="primary">TwmD</name>
    <name evidence="3" type="synonym">TwnD</name>
</gene>
<accession>A0A2L0P0J8</accession>
<protein>
    <recommendedName>
        <fullName evidence="3">Cytochrome P450 monooxygenase TwmD</fullName>
        <ecNumber evidence="5">1.-.-.-</ecNumber>
    </recommendedName>
    <alternativeName>
        <fullName evidence="3">Wortmanamides biosynthesis cluster protein D</fullName>
    </alternativeName>
</protein>